<evidence type="ECO:0000255" key="1">
    <source>
        <dbReference type="HAMAP-Rule" id="MF_00758"/>
    </source>
</evidence>
<comment type="similarity">
    <text evidence="1">Belongs to the UPF0301 (AlgH) family.</text>
</comment>
<proteinExistence type="inferred from homology"/>
<accession>A1TI09</accession>
<sequence length="201" mass="22044">MAQPEDPEDFVAPAAYRVRAGTMLLANTDLLEPTFRRSVIYVVEHNDGGTLGVVLNRPSETAVYNVLPQWAKLATKPKTMFIGGPVKRDAALCLATLRVGIDPAGVDGLRHVQGRVVMVDLDADPDSIAPMVEGVRIFAGYSGWTIGQLEGEIERDDWIVLSALPSDVLVEPRVDLWARILRRQPMPLSLLATHPIDLSRN</sequence>
<protein>
    <recommendedName>
        <fullName evidence="1">UPF0301 protein Mvan_6057</fullName>
    </recommendedName>
</protein>
<feature type="chain" id="PRO_1000046666" description="UPF0301 protein Mvan_6057">
    <location>
        <begin position="1"/>
        <end position="201"/>
    </location>
</feature>
<dbReference type="EMBL" id="CP000511">
    <property type="protein sequence ID" value="ABM16809.1"/>
    <property type="molecule type" value="Genomic_DNA"/>
</dbReference>
<dbReference type="RefSeq" id="WP_011783153.1">
    <property type="nucleotide sequence ID" value="NZ_JACKSD010000348.1"/>
</dbReference>
<dbReference type="SMR" id="A1TI09"/>
<dbReference type="STRING" id="350058.Mvan_6057"/>
<dbReference type="KEGG" id="mva:Mvan_6057"/>
<dbReference type="eggNOG" id="COG1678">
    <property type="taxonomic scope" value="Bacteria"/>
</dbReference>
<dbReference type="HOGENOM" id="CLU_057596_2_0_11"/>
<dbReference type="Proteomes" id="UP000009159">
    <property type="component" value="Chromosome"/>
</dbReference>
<dbReference type="GO" id="GO:0005829">
    <property type="term" value="C:cytosol"/>
    <property type="evidence" value="ECO:0007669"/>
    <property type="project" value="TreeGrafter"/>
</dbReference>
<dbReference type="Gene3D" id="3.40.1740.10">
    <property type="entry name" value="VC0467-like"/>
    <property type="match status" value="1"/>
</dbReference>
<dbReference type="HAMAP" id="MF_00758">
    <property type="entry name" value="UPF0301"/>
    <property type="match status" value="1"/>
</dbReference>
<dbReference type="InterPro" id="IPR003774">
    <property type="entry name" value="AlgH-like"/>
</dbReference>
<dbReference type="NCBIfam" id="NF001269">
    <property type="entry name" value="PRK00228.2-1"/>
    <property type="match status" value="1"/>
</dbReference>
<dbReference type="NCBIfam" id="NF001272">
    <property type="entry name" value="PRK00228.2-4"/>
    <property type="match status" value="1"/>
</dbReference>
<dbReference type="PANTHER" id="PTHR30327">
    <property type="entry name" value="UNCHARACTERIZED PROTEIN YQGE"/>
    <property type="match status" value="1"/>
</dbReference>
<dbReference type="PANTHER" id="PTHR30327:SF1">
    <property type="entry name" value="UPF0301 PROTEIN YQGE"/>
    <property type="match status" value="1"/>
</dbReference>
<dbReference type="Pfam" id="PF02622">
    <property type="entry name" value="DUF179"/>
    <property type="match status" value="1"/>
</dbReference>
<dbReference type="SUPFAM" id="SSF143456">
    <property type="entry name" value="VC0467-like"/>
    <property type="match status" value="1"/>
</dbReference>
<gene>
    <name type="ordered locus">Mvan_6057</name>
</gene>
<name>Y6057_MYCVP</name>
<reference key="1">
    <citation type="submission" date="2006-12" db="EMBL/GenBank/DDBJ databases">
        <title>Complete sequence of Mycobacterium vanbaalenii PYR-1.</title>
        <authorList>
            <consortium name="US DOE Joint Genome Institute"/>
            <person name="Copeland A."/>
            <person name="Lucas S."/>
            <person name="Lapidus A."/>
            <person name="Barry K."/>
            <person name="Detter J.C."/>
            <person name="Glavina del Rio T."/>
            <person name="Hammon N."/>
            <person name="Israni S."/>
            <person name="Dalin E."/>
            <person name="Tice H."/>
            <person name="Pitluck S."/>
            <person name="Singan V."/>
            <person name="Schmutz J."/>
            <person name="Larimer F."/>
            <person name="Land M."/>
            <person name="Hauser L."/>
            <person name="Kyrpides N."/>
            <person name="Anderson I.J."/>
            <person name="Miller C."/>
            <person name="Richardson P."/>
        </authorList>
    </citation>
    <scope>NUCLEOTIDE SEQUENCE [LARGE SCALE GENOMIC DNA]</scope>
    <source>
        <strain>DSM 7251 / JCM 13017 / BCRC 16820 / KCTC 9966 / NRRL B-24157 / PYR-1</strain>
    </source>
</reference>
<organism>
    <name type="scientific">Mycolicibacterium vanbaalenii (strain DSM 7251 / JCM 13017 / BCRC 16820 / KCTC 9966 / NRRL B-24157 / PYR-1)</name>
    <name type="common">Mycobacterium vanbaalenii</name>
    <dbReference type="NCBI Taxonomy" id="350058"/>
    <lineage>
        <taxon>Bacteria</taxon>
        <taxon>Bacillati</taxon>
        <taxon>Actinomycetota</taxon>
        <taxon>Actinomycetes</taxon>
        <taxon>Mycobacteriales</taxon>
        <taxon>Mycobacteriaceae</taxon>
        <taxon>Mycolicibacterium</taxon>
    </lineage>
</organism>